<protein>
    <recommendedName>
        <fullName>Histone H3.3</fullName>
    </recommendedName>
</protein>
<feature type="chain" id="PRO_0000221279" description="Histone H3.3">
    <location>
        <begin position="1" status="less than"/>
        <end position="80"/>
    </location>
</feature>
<feature type="non-terminal residue">
    <location>
        <position position="1"/>
    </location>
</feature>
<name>H33_HORVU</name>
<accession>P06353</accession>
<evidence type="ECO:0000250" key="1"/>
<evidence type="ECO:0000305" key="2"/>
<reference key="1">
    <citation type="journal article" date="1986" name="Carlsberg Res. Commun.">
        <title>Identification and characterization of a cDNA clone for histone H3 in barley.</title>
        <authorList>
            <person name="Chojecki J."/>
        </authorList>
    </citation>
    <scope>NUCLEOTIDE SEQUENCE [MRNA]</scope>
</reference>
<sequence length="80" mass="9233">KSTELLIRKLPFQRLVREIAQDFKTDLRFQSHAVLALQEAAEAYLVGLFEDTNLCAIHAKRVTIMPKDIQLARRIRGERA</sequence>
<comment type="function">
    <text>Variant histone H3 which replaces conventional H3 in a wide range of nucleosomes in active genes. Constitutes the predominant form of histone H3 in non-dividing cells and is incorporated into chromatin independently of DNA synthesis. Deposited at sites of nucleosomal displacement throughout transcribed genes, suggesting that it represents an epigenetic imprint of transcriptionally active chromatin. Nucleosomes wrap and compact DNA into chromatin, limiting DNA accessibility to the cellular machineries which require DNA as a template. Histones thereby play a central role in transcription regulation, DNA repair, DNA replication and chromosomal stability. DNA accessibility is regulated via a complex set of post-translational modifications of histones, also called histone code, and nucleosome remodeling.</text>
</comment>
<comment type="subunit">
    <text>The nucleosome is a histone octamer containing two molecules each of H2A, H2B, H3 and H4 assembled in one H3-H4 heterotetramer and two H2A-H2B heterodimers. The octamer wraps approximately 147 bp of DNA.</text>
</comment>
<comment type="subcellular location">
    <subcellularLocation>
        <location evidence="1">Nucleus</location>
    </subcellularLocation>
    <subcellularLocation>
        <location evidence="1">Chromosome</location>
    </subcellularLocation>
</comment>
<comment type="similarity">
    <text evidence="2">Belongs to the histone H3 family.</text>
</comment>
<keyword id="KW-0158">Chromosome</keyword>
<keyword id="KW-0238">DNA-binding</keyword>
<keyword id="KW-0544">Nucleosome core</keyword>
<keyword id="KW-0539">Nucleus</keyword>
<proteinExistence type="evidence at transcript level"/>
<dbReference type="EMBL" id="M34928">
    <property type="protein sequence ID" value="AAA32965.1"/>
    <property type="molecule type" value="mRNA"/>
</dbReference>
<dbReference type="PIR" id="A02632">
    <property type="entry name" value="HSBH3"/>
</dbReference>
<dbReference type="SMR" id="P06353"/>
<dbReference type="ExpressionAtlas" id="P06353">
    <property type="expression patterns" value="baseline and differential"/>
</dbReference>
<dbReference type="GO" id="GO:0000786">
    <property type="term" value="C:nucleosome"/>
    <property type="evidence" value="ECO:0007669"/>
    <property type="project" value="UniProtKB-KW"/>
</dbReference>
<dbReference type="GO" id="GO:0005634">
    <property type="term" value="C:nucleus"/>
    <property type="evidence" value="ECO:0007669"/>
    <property type="project" value="UniProtKB-SubCell"/>
</dbReference>
<dbReference type="GO" id="GO:0003677">
    <property type="term" value="F:DNA binding"/>
    <property type="evidence" value="ECO:0007669"/>
    <property type="project" value="UniProtKB-KW"/>
</dbReference>
<dbReference type="GO" id="GO:0046982">
    <property type="term" value="F:protein heterodimerization activity"/>
    <property type="evidence" value="ECO:0007669"/>
    <property type="project" value="InterPro"/>
</dbReference>
<dbReference type="GO" id="GO:0030527">
    <property type="term" value="F:structural constituent of chromatin"/>
    <property type="evidence" value="ECO:0007669"/>
    <property type="project" value="InterPro"/>
</dbReference>
<dbReference type="CDD" id="cd22911">
    <property type="entry name" value="HFD_H3"/>
    <property type="match status" value="1"/>
</dbReference>
<dbReference type="FunFam" id="1.10.20.10:FF:000044">
    <property type="entry name" value="Histone H3.3"/>
    <property type="match status" value="1"/>
</dbReference>
<dbReference type="Gene3D" id="1.10.20.10">
    <property type="entry name" value="Histone, subunit A"/>
    <property type="match status" value="1"/>
</dbReference>
<dbReference type="InterPro" id="IPR009072">
    <property type="entry name" value="Histone-fold"/>
</dbReference>
<dbReference type="InterPro" id="IPR007125">
    <property type="entry name" value="Histone_H2A/H2B/H3"/>
</dbReference>
<dbReference type="InterPro" id="IPR000164">
    <property type="entry name" value="Histone_H3/CENP-A"/>
</dbReference>
<dbReference type="PANTHER" id="PTHR11426">
    <property type="entry name" value="HISTONE H3"/>
    <property type="match status" value="1"/>
</dbReference>
<dbReference type="Pfam" id="PF00125">
    <property type="entry name" value="Histone"/>
    <property type="match status" value="1"/>
</dbReference>
<dbReference type="PRINTS" id="PR00622">
    <property type="entry name" value="HISTONEH3"/>
</dbReference>
<dbReference type="SMART" id="SM00428">
    <property type="entry name" value="H3"/>
    <property type="match status" value="1"/>
</dbReference>
<dbReference type="SUPFAM" id="SSF47113">
    <property type="entry name" value="Histone-fold"/>
    <property type="match status" value="1"/>
</dbReference>
<dbReference type="PROSITE" id="PS00959">
    <property type="entry name" value="HISTONE_H3_2"/>
    <property type="match status" value="1"/>
</dbReference>
<organism>
    <name type="scientific">Hordeum vulgare</name>
    <name type="common">Barley</name>
    <dbReference type="NCBI Taxonomy" id="4513"/>
    <lineage>
        <taxon>Eukaryota</taxon>
        <taxon>Viridiplantae</taxon>
        <taxon>Streptophyta</taxon>
        <taxon>Embryophyta</taxon>
        <taxon>Tracheophyta</taxon>
        <taxon>Spermatophyta</taxon>
        <taxon>Magnoliopsida</taxon>
        <taxon>Liliopsida</taxon>
        <taxon>Poales</taxon>
        <taxon>Poaceae</taxon>
        <taxon>BOP clade</taxon>
        <taxon>Pooideae</taxon>
        <taxon>Triticodae</taxon>
        <taxon>Triticeae</taxon>
        <taxon>Hordeinae</taxon>
        <taxon>Hordeum</taxon>
    </lineage>
</organism>